<proteinExistence type="inferred from homology"/>
<dbReference type="EC" id="3.1.-.-" evidence="1"/>
<dbReference type="EMBL" id="BX936398">
    <property type="protein sequence ID" value="CAH20351.1"/>
    <property type="molecule type" value="Genomic_DNA"/>
</dbReference>
<dbReference type="RefSeq" id="WP_011191934.1">
    <property type="nucleotide sequence ID" value="NC_006155.1"/>
</dbReference>
<dbReference type="SMR" id="Q66DD5"/>
<dbReference type="GeneID" id="96664631"/>
<dbReference type="KEGG" id="ypo:BZ17_1432"/>
<dbReference type="KEGG" id="yps:YPTB1111"/>
<dbReference type="PATRIC" id="fig|273123.14.peg.1515"/>
<dbReference type="Proteomes" id="UP000001011">
    <property type="component" value="Chromosome"/>
</dbReference>
<dbReference type="GO" id="GO:0005737">
    <property type="term" value="C:cytoplasm"/>
    <property type="evidence" value="ECO:0007669"/>
    <property type="project" value="UniProtKB-SubCell"/>
</dbReference>
<dbReference type="GO" id="GO:0004222">
    <property type="term" value="F:metalloendopeptidase activity"/>
    <property type="evidence" value="ECO:0007669"/>
    <property type="project" value="InterPro"/>
</dbReference>
<dbReference type="GO" id="GO:0004521">
    <property type="term" value="F:RNA endonuclease activity"/>
    <property type="evidence" value="ECO:0007669"/>
    <property type="project" value="UniProtKB-UniRule"/>
</dbReference>
<dbReference type="GO" id="GO:0008270">
    <property type="term" value="F:zinc ion binding"/>
    <property type="evidence" value="ECO:0007669"/>
    <property type="project" value="UniProtKB-UniRule"/>
</dbReference>
<dbReference type="GO" id="GO:0006364">
    <property type="term" value="P:rRNA processing"/>
    <property type="evidence" value="ECO:0007669"/>
    <property type="project" value="UniProtKB-UniRule"/>
</dbReference>
<dbReference type="Gene3D" id="3.40.390.30">
    <property type="entry name" value="Metalloproteases ('zincins'), catalytic domain"/>
    <property type="match status" value="1"/>
</dbReference>
<dbReference type="HAMAP" id="MF_00009">
    <property type="entry name" value="Endoribonucl_YbeY"/>
    <property type="match status" value="1"/>
</dbReference>
<dbReference type="InterPro" id="IPR023091">
    <property type="entry name" value="MetalPrtase_cat_dom_sf_prd"/>
</dbReference>
<dbReference type="InterPro" id="IPR002036">
    <property type="entry name" value="YbeY"/>
</dbReference>
<dbReference type="InterPro" id="IPR020549">
    <property type="entry name" value="YbeY_CS"/>
</dbReference>
<dbReference type="NCBIfam" id="TIGR00043">
    <property type="entry name" value="rRNA maturation RNase YbeY"/>
    <property type="match status" value="1"/>
</dbReference>
<dbReference type="PANTHER" id="PTHR46986">
    <property type="entry name" value="ENDORIBONUCLEASE YBEY, CHLOROPLASTIC"/>
    <property type="match status" value="1"/>
</dbReference>
<dbReference type="PANTHER" id="PTHR46986:SF1">
    <property type="entry name" value="ENDORIBONUCLEASE YBEY, CHLOROPLASTIC"/>
    <property type="match status" value="1"/>
</dbReference>
<dbReference type="Pfam" id="PF02130">
    <property type="entry name" value="YbeY"/>
    <property type="match status" value="1"/>
</dbReference>
<dbReference type="SUPFAM" id="SSF55486">
    <property type="entry name" value="Metalloproteases ('zincins'), catalytic domain"/>
    <property type="match status" value="1"/>
</dbReference>
<dbReference type="PROSITE" id="PS01306">
    <property type="entry name" value="UPF0054"/>
    <property type="match status" value="1"/>
</dbReference>
<organism>
    <name type="scientific">Yersinia pseudotuberculosis serotype I (strain IP32953)</name>
    <dbReference type="NCBI Taxonomy" id="273123"/>
    <lineage>
        <taxon>Bacteria</taxon>
        <taxon>Pseudomonadati</taxon>
        <taxon>Pseudomonadota</taxon>
        <taxon>Gammaproteobacteria</taxon>
        <taxon>Enterobacterales</taxon>
        <taxon>Yersiniaceae</taxon>
        <taxon>Yersinia</taxon>
    </lineage>
</organism>
<accession>Q66DD5</accession>
<name>YBEY_YERPS</name>
<comment type="function">
    <text evidence="1">Single strand-specific metallo-endoribonuclease involved in late-stage 70S ribosome quality control and in maturation of the 3' terminus of the 16S rRNA.</text>
</comment>
<comment type="cofactor">
    <cofactor evidence="1">
        <name>Zn(2+)</name>
        <dbReference type="ChEBI" id="CHEBI:29105"/>
    </cofactor>
    <text evidence="1">Binds 1 zinc ion.</text>
</comment>
<comment type="subcellular location">
    <subcellularLocation>
        <location evidence="1">Cytoplasm</location>
    </subcellularLocation>
</comment>
<comment type="similarity">
    <text evidence="1">Belongs to the endoribonuclease YbeY family.</text>
</comment>
<keyword id="KW-0963">Cytoplasm</keyword>
<keyword id="KW-0255">Endonuclease</keyword>
<keyword id="KW-0378">Hydrolase</keyword>
<keyword id="KW-0479">Metal-binding</keyword>
<keyword id="KW-0540">Nuclease</keyword>
<keyword id="KW-0690">Ribosome biogenesis</keyword>
<keyword id="KW-0698">rRNA processing</keyword>
<keyword id="KW-0862">Zinc</keyword>
<evidence type="ECO:0000255" key="1">
    <source>
        <dbReference type="HAMAP-Rule" id="MF_00009"/>
    </source>
</evidence>
<protein>
    <recommendedName>
        <fullName evidence="1">Endoribonuclease YbeY</fullName>
        <ecNumber evidence="1">3.1.-.-</ecNumber>
    </recommendedName>
</protein>
<reference key="1">
    <citation type="journal article" date="2004" name="Proc. Natl. Acad. Sci. U.S.A.">
        <title>Insights into the evolution of Yersinia pestis through whole-genome comparison with Yersinia pseudotuberculosis.</title>
        <authorList>
            <person name="Chain P.S.G."/>
            <person name="Carniel E."/>
            <person name="Larimer F.W."/>
            <person name="Lamerdin J."/>
            <person name="Stoutland P.O."/>
            <person name="Regala W.M."/>
            <person name="Georgescu A.M."/>
            <person name="Vergez L.M."/>
            <person name="Land M.L."/>
            <person name="Motin V.L."/>
            <person name="Brubaker R.R."/>
            <person name="Fowler J."/>
            <person name="Hinnebusch J."/>
            <person name="Marceau M."/>
            <person name="Medigue C."/>
            <person name="Simonet M."/>
            <person name="Chenal-Francisque V."/>
            <person name="Souza B."/>
            <person name="Dacheux D."/>
            <person name="Elliott J.M."/>
            <person name="Derbise A."/>
            <person name="Hauser L.J."/>
            <person name="Garcia E."/>
        </authorList>
    </citation>
    <scope>NUCLEOTIDE SEQUENCE [LARGE SCALE GENOMIC DNA]</scope>
    <source>
        <strain>IP32953</strain>
    </source>
</reference>
<feature type="chain" id="PRO_0000102576" description="Endoribonuclease YbeY">
    <location>
        <begin position="1"/>
        <end position="157"/>
    </location>
</feature>
<feature type="binding site" evidence="1">
    <location>
        <position position="114"/>
    </location>
    <ligand>
        <name>Zn(2+)</name>
        <dbReference type="ChEBI" id="CHEBI:29105"/>
        <note>catalytic</note>
    </ligand>
</feature>
<feature type="binding site" evidence="1">
    <location>
        <position position="118"/>
    </location>
    <ligand>
        <name>Zn(2+)</name>
        <dbReference type="ChEBI" id="CHEBI:29105"/>
        <note>catalytic</note>
    </ligand>
</feature>
<feature type="binding site" evidence="1">
    <location>
        <position position="124"/>
    </location>
    <ligand>
        <name>Zn(2+)</name>
        <dbReference type="ChEBI" id="CHEBI:29105"/>
        <note>catalytic</note>
    </ligand>
</feature>
<sequence>MSQVILDLQIACADSQGLPTEGDFQRWLEAVLPLFQPVSEVTIRLVDEAESHDLNLTYRGKDKSTNVLSFPFEAPPEIELPLLGDLIICRQVVEKEAIEQEKALLAHWAHMVVHGSLHLLGYDHIDDDEAEEMELIETEIMHGLGYPDPYISEKDPD</sequence>
<gene>
    <name evidence="1" type="primary">ybeY</name>
    <name type="ordered locus">YPTB1111</name>
</gene>